<name>RNY_ALKMQ</name>
<gene>
    <name evidence="1" type="primary">rny</name>
    <name type="ordered locus">Amet_2657</name>
</gene>
<protein>
    <recommendedName>
        <fullName evidence="1">Ribonuclease Y</fullName>
        <shortName evidence="1">RNase Y</shortName>
        <ecNumber evidence="1">3.1.-.-</ecNumber>
    </recommendedName>
</protein>
<comment type="function">
    <text evidence="1">Endoribonuclease that initiates mRNA decay.</text>
</comment>
<comment type="similarity">
    <text evidence="1">Belongs to the RNase Y family.</text>
</comment>
<reference key="1">
    <citation type="journal article" date="2016" name="Genome Announc.">
        <title>Complete genome sequence of Alkaliphilus metalliredigens strain QYMF, an alkaliphilic and metal-reducing bacterium isolated from borax-contaminated leachate ponds.</title>
        <authorList>
            <person name="Hwang C."/>
            <person name="Copeland A."/>
            <person name="Lucas S."/>
            <person name="Lapidus A."/>
            <person name="Barry K."/>
            <person name="Detter J.C."/>
            <person name="Glavina Del Rio T."/>
            <person name="Hammon N."/>
            <person name="Israni S."/>
            <person name="Dalin E."/>
            <person name="Tice H."/>
            <person name="Pitluck S."/>
            <person name="Chertkov O."/>
            <person name="Brettin T."/>
            <person name="Bruce D."/>
            <person name="Han C."/>
            <person name="Schmutz J."/>
            <person name="Larimer F."/>
            <person name="Land M.L."/>
            <person name="Hauser L."/>
            <person name="Kyrpides N."/>
            <person name="Mikhailova N."/>
            <person name="Ye Q."/>
            <person name="Zhou J."/>
            <person name="Richardson P."/>
            <person name="Fields M.W."/>
        </authorList>
    </citation>
    <scope>NUCLEOTIDE SEQUENCE [LARGE SCALE GENOMIC DNA]</scope>
    <source>
        <strain>QYMF</strain>
    </source>
</reference>
<keyword id="KW-0255">Endonuclease</keyword>
<keyword id="KW-0378">Hydrolase</keyword>
<keyword id="KW-0540">Nuclease</keyword>
<keyword id="KW-1185">Reference proteome</keyword>
<keyword id="KW-0694">RNA-binding</keyword>
<proteinExistence type="inferred from homology"/>
<evidence type="ECO:0000255" key="1">
    <source>
        <dbReference type="HAMAP-Rule" id="MF_00335"/>
    </source>
</evidence>
<evidence type="ECO:0000255" key="2">
    <source>
        <dbReference type="PROSITE-ProRule" id="PRU01175"/>
    </source>
</evidence>
<evidence type="ECO:0000256" key="3">
    <source>
        <dbReference type="SAM" id="MobiDB-lite"/>
    </source>
</evidence>
<accession>A6TRJ1</accession>
<organism>
    <name type="scientific">Alkaliphilus metalliredigens (strain QYMF)</name>
    <dbReference type="NCBI Taxonomy" id="293826"/>
    <lineage>
        <taxon>Bacteria</taxon>
        <taxon>Bacillati</taxon>
        <taxon>Bacillota</taxon>
        <taxon>Clostridia</taxon>
        <taxon>Peptostreptococcales</taxon>
        <taxon>Natronincolaceae</taxon>
        <taxon>Alkaliphilus</taxon>
    </lineage>
</organism>
<feature type="chain" id="PRO_0000344808" description="Ribonuclease Y">
    <location>
        <begin position="1"/>
        <end position="475"/>
    </location>
</feature>
<feature type="domain" description="KH" evidence="1">
    <location>
        <begin position="165"/>
        <end position="228"/>
    </location>
</feature>
<feature type="domain" description="HD" evidence="2">
    <location>
        <begin position="291"/>
        <end position="384"/>
    </location>
</feature>
<feature type="region of interest" description="Disordered" evidence="3">
    <location>
        <begin position="34"/>
        <end position="73"/>
    </location>
</feature>
<dbReference type="EC" id="3.1.-.-" evidence="1"/>
<dbReference type="EMBL" id="CP000724">
    <property type="protein sequence ID" value="ABR48809.1"/>
    <property type="molecule type" value="Genomic_DNA"/>
</dbReference>
<dbReference type="STRING" id="293826.Amet_2657"/>
<dbReference type="KEGG" id="amt:Amet_2657"/>
<dbReference type="eggNOG" id="COG1418">
    <property type="taxonomic scope" value="Bacteria"/>
</dbReference>
<dbReference type="HOGENOM" id="CLU_028328_0_0_9"/>
<dbReference type="Proteomes" id="UP000001572">
    <property type="component" value="Chromosome"/>
</dbReference>
<dbReference type="GO" id="GO:0005886">
    <property type="term" value="C:plasma membrane"/>
    <property type="evidence" value="ECO:0007669"/>
    <property type="project" value="UniProtKB-UniRule"/>
</dbReference>
<dbReference type="GO" id="GO:0003723">
    <property type="term" value="F:RNA binding"/>
    <property type="evidence" value="ECO:0007669"/>
    <property type="project" value="UniProtKB-UniRule"/>
</dbReference>
<dbReference type="GO" id="GO:0004521">
    <property type="term" value="F:RNA endonuclease activity"/>
    <property type="evidence" value="ECO:0007669"/>
    <property type="project" value="UniProtKB-UniRule"/>
</dbReference>
<dbReference type="GO" id="GO:0006402">
    <property type="term" value="P:mRNA catabolic process"/>
    <property type="evidence" value="ECO:0007669"/>
    <property type="project" value="UniProtKB-UniRule"/>
</dbReference>
<dbReference type="CDD" id="cd00077">
    <property type="entry name" value="HDc"/>
    <property type="match status" value="1"/>
</dbReference>
<dbReference type="CDD" id="cd22431">
    <property type="entry name" value="KH-I_RNaseY"/>
    <property type="match status" value="1"/>
</dbReference>
<dbReference type="FunFam" id="1.10.3210.10:FF:000003">
    <property type="entry name" value="Ribonuclease Y"/>
    <property type="match status" value="1"/>
</dbReference>
<dbReference type="FunFam" id="3.30.1370.10:FF:000006">
    <property type="entry name" value="Ribonuclease Y"/>
    <property type="match status" value="1"/>
</dbReference>
<dbReference type="Gene3D" id="1.10.3210.10">
    <property type="entry name" value="Hypothetical protein af1432"/>
    <property type="match status" value="1"/>
</dbReference>
<dbReference type="Gene3D" id="3.30.1370.10">
    <property type="entry name" value="K Homology domain, type 1"/>
    <property type="match status" value="1"/>
</dbReference>
<dbReference type="HAMAP" id="MF_00335">
    <property type="entry name" value="RNase_Y"/>
    <property type="match status" value="1"/>
</dbReference>
<dbReference type="InterPro" id="IPR003607">
    <property type="entry name" value="HD/PDEase_dom"/>
</dbReference>
<dbReference type="InterPro" id="IPR006674">
    <property type="entry name" value="HD_domain"/>
</dbReference>
<dbReference type="InterPro" id="IPR006675">
    <property type="entry name" value="HDIG_dom"/>
</dbReference>
<dbReference type="InterPro" id="IPR004087">
    <property type="entry name" value="KH_dom"/>
</dbReference>
<dbReference type="InterPro" id="IPR004088">
    <property type="entry name" value="KH_dom_type_1"/>
</dbReference>
<dbReference type="InterPro" id="IPR036612">
    <property type="entry name" value="KH_dom_type_1_sf"/>
</dbReference>
<dbReference type="InterPro" id="IPR017705">
    <property type="entry name" value="Ribonuclease_Y"/>
</dbReference>
<dbReference type="InterPro" id="IPR022711">
    <property type="entry name" value="RNase_Y_N"/>
</dbReference>
<dbReference type="NCBIfam" id="TIGR00277">
    <property type="entry name" value="HDIG"/>
    <property type="match status" value="1"/>
</dbReference>
<dbReference type="NCBIfam" id="TIGR03319">
    <property type="entry name" value="RNase_Y"/>
    <property type="match status" value="1"/>
</dbReference>
<dbReference type="PANTHER" id="PTHR12826">
    <property type="entry name" value="RIBONUCLEASE Y"/>
    <property type="match status" value="1"/>
</dbReference>
<dbReference type="PANTHER" id="PTHR12826:SF15">
    <property type="entry name" value="RIBONUCLEASE Y"/>
    <property type="match status" value="1"/>
</dbReference>
<dbReference type="Pfam" id="PF01966">
    <property type="entry name" value="HD"/>
    <property type="match status" value="1"/>
</dbReference>
<dbReference type="Pfam" id="PF00013">
    <property type="entry name" value="KH_1"/>
    <property type="match status" value="1"/>
</dbReference>
<dbReference type="Pfam" id="PF12072">
    <property type="entry name" value="RNase_Y_N"/>
    <property type="match status" value="1"/>
</dbReference>
<dbReference type="SMART" id="SM00471">
    <property type="entry name" value="HDc"/>
    <property type="match status" value="1"/>
</dbReference>
<dbReference type="SMART" id="SM00322">
    <property type="entry name" value="KH"/>
    <property type="match status" value="1"/>
</dbReference>
<dbReference type="SUPFAM" id="SSF54791">
    <property type="entry name" value="Eukaryotic type KH-domain (KH-domain type I)"/>
    <property type="match status" value="1"/>
</dbReference>
<dbReference type="SUPFAM" id="SSF109604">
    <property type="entry name" value="HD-domain/PDEase-like"/>
    <property type="match status" value="1"/>
</dbReference>
<dbReference type="PROSITE" id="PS51831">
    <property type="entry name" value="HD"/>
    <property type="match status" value="1"/>
</dbReference>
<dbReference type="PROSITE" id="PS50084">
    <property type="entry name" value="KH_TYPE_1"/>
    <property type="match status" value="1"/>
</dbReference>
<sequence length="475" mass="54276">MAKKIKDDADKNAETTKKEVLLEAKEEIHKLRNEFERESRERRNELQRVERRLMQKEESLDKKSETLEQKDDRLSRKLRDLETKEEEIKLLYNKEVQKLEELSGLTSQQARELLLSDVEKEVKYEAAMMVKDIETKAKDDADKKAREIITLAIQKCAADHVAETTVTVVQLPNDEMKGRIIGREGRNIRTLETLTGIDLIIDDTPEAVILSGFDPIRREVARIALEKLIADGRIHPARIEEMVEKAKKEVENILKEEGEQATFDTGVHGLHPELIRLLGRLKYRTSYGQNVLKHAIEVSHLAGLMATELGADPKLAKRAGLLHDIGKAVDHEVEGTHIEIGMELLRKYKETKDVIHAMSTHHGDFEPETIEAILVTAADAISAARPGARRETLESYIKRLEKLEDIANNYDGVEKSFAIQAGREIRIIVKPEVYNDDEIYMFAREITKKIEADLEYPGQIKVNVIRETRAIEYAK</sequence>